<protein>
    <recommendedName>
        <fullName evidence="1">SsrA-binding protein</fullName>
    </recommendedName>
    <alternativeName>
        <fullName evidence="1">Small protein B</fullName>
    </alternativeName>
</protein>
<evidence type="ECO:0000255" key="1">
    <source>
        <dbReference type="HAMAP-Rule" id="MF_00023"/>
    </source>
</evidence>
<proteinExistence type="inferred from homology"/>
<comment type="function">
    <text evidence="1">Required for rescue of stalled ribosomes mediated by trans-translation. Binds to transfer-messenger RNA (tmRNA), required for stable association of tmRNA with ribosomes. tmRNA and SmpB together mimic tRNA shape, replacing the anticodon stem-loop with SmpB. tmRNA is encoded by the ssrA gene; the 2 termini fold to resemble tRNA(Ala) and it encodes a 'tag peptide', a short internal open reading frame. During trans-translation Ala-aminoacylated tmRNA acts like a tRNA, entering the A-site of stalled ribosomes, displacing the stalled mRNA. The ribosome then switches to translate the ORF on the tmRNA; the nascent peptide is terminated with the 'tag peptide' encoded by the tmRNA and targeted for degradation. The ribosome is freed to recommence translation, which seems to be the essential function of trans-translation.</text>
</comment>
<comment type="subcellular location">
    <subcellularLocation>
        <location evidence="1">Cytoplasm</location>
    </subcellularLocation>
    <text evidence="1">The tmRNA-SmpB complex associates with stalled 70S ribosomes.</text>
</comment>
<comment type="similarity">
    <text evidence="1">Belongs to the SmpB family.</text>
</comment>
<gene>
    <name evidence="1" type="primary">smpB</name>
    <name type="ordered locus">Ccon26_12050</name>
    <name type="ORF">CCC13826_0060</name>
</gene>
<name>SSRP_CAMC1</name>
<feature type="chain" id="PRO_0000331027" description="SsrA-binding protein">
    <location>
        <begin position="1"/>
        <end position="151"/>
    </location>
</feature>
<accession>A7ZE53</accession>
<keyword id="KW-0963">Cytoplasm</keyword>
<keyword id="KW-0694">RNA-binding</keyword>
<organism>
    <name type="scientific">Campylobacter concisus (strain 13826)</name>
    <dbReference type="NCBI Taxonomy" id="360104"/>
    <lineage>
        <taxon>Bacteria</taxon>
        <taxon>Pseudomonadati</taxon>
        <taxon>Campylobacterota</taxon>
        <taxon>Epsilonproteobacteria</taxon>
        <taxon>Campylobacterales</taxon>
        <taxon>Campylobacteraceae</taxon>
        <taxon>Campylobacter</taxon>
    </lineage>
</organism>
<reference key="1">
    <citation type="submission" date="2007-10" db="EMBL/GenBank/DDBJ databases">
        <title>Genome sequence of Campylobacter concisus 13826 isolated from human feces.</title>
        <authorList>
            <person name="Fouts D.E."/>
            <person name="Mongodin E.F."/>
            <person name="Puiu D."/>
            <person name="Sebastian Y."/>
            <person name="Miller W.G."/>
            <person name="Mandrell R.E."/>
            <person name="On S."/>
            <person name="Nelson K.E."/>
        </authorList>
    </citation>
    <scope>NUCLEOTIDE SEQUENCE [LARGE SCALE GENOMIC DNA]</scope>
    <source>
        <strain>13826</strain>
    </source>
</reference>
<sequence length="151" mass="17104">MIKDLAKNKKALHDFSILETFEAGIVLKGSEVKALRAGRANLKDSFVRVIKGELFLLNAHISYLETTHSAFRPNERAARKLLMHRKQIDKIFGQVSQDGLALVVLALYLSDKNIVKARLALAKGKNLHDKRETLKRREADKEARAAIKRYV</sequence>
<dbReference type="EMBL" id="CP000792">
    <property type="protein sequence ID" value="EAT97794.1"/>
    <property type="molecule type" value="Genomic_DNA"/>
</dbReference>
<dbReference type="SMR" id="A7ZE53"/>
<dbReference type="STRING" id="360104.CCC13826_0060"/>
<dbReference type="KEGG" id="cco:CCC13826_0060"/>
<dbReference type="eggNOG" id="COG0691">
    <property type="taxonomic scope" value="Bacteria"/>
</dbReference>
<dbReference type="HOGENOM" id="CLU_108953_3_1_7"/>
<dbReference type="Proteomes" id="UP000001121">
    <property type="component" value="Chromosome"/>
</dbReference>
<dbReference type="GO" id="GO:0005829">
    <property type="term" value="C:cytosol"/>
    <property type="evidence" value="ECO:0007669"/>
    <property type="project" value="TreeGrafter"/>
</dbReference>
<dbReference type="GO" id="GO:0003723">
    <property type="term" value="F:RNA binding"/>
    <property type="evidence" value="ECO:0007669"/>
    <property type="project" value="UniProtKB-UniRule"/>
</dbReference>
<dbReference type="GO" id="GO:0070929">
    <property type="term" value="P:trans-translation"/>
    <property type="evidence" value="ECO:0007669"/>
    <property type="project" value="UniProtKB-UniRule"/>
</dbReference>
<dbReference type="CDD" id="cd09294">
    <property type="entry name" value="SmpB"/>
    <property type="match status" value="1"/>
</dbReference>
<dbReference type="Gene3D" id="2.40.280.10">
    <property type="match status" value="1"/>
</dbReference>
<dbReference type="HAMAP" id="MF_00023">
    <property type="entry name" value="SmpB"/>
    <property type="match status" value="1"/>
</dbReference>
<dbReference type="InterPro" id="IPR023620">
    <property type="entry name" value="SmpB"/>
</dbReference>
<dbReference type="InterPro" id="IPR000037">
    <property type="entry name" value="SsrA-bd_prot"/>
</dbReference>
<dbReference type="InterPro" id="IPR020081">
    <property type="entry name" value="SsrA-bd_prot_CS"/>
</dbReference>
<dbReference type="NCBIfam" id="NF003843">
    <property type="entry name" value="PRK05422.1"/>
    <property type="match status" value="1"/>
</dbReference>
<dbReference type="NCBIfam" id="TIGR00086">
    <property type="entry name" value="smpB"/>
    <property type="match status" value="1"/>
</dbReference>
<dbReference type="PANTHER" id="PTHR30308:SF2">
    <property type="entry name" value="SSRA-BINDING PROTEIN"/>
    <property type="match status" value="1"/>
</dbReference>
<dbReference type="PANTHER" id="PTHR30308">
    <property type="entry name" value="TMRNA-BINDING COMPONENT OF TRANS-TRANSLATION TAGGING COMPLEX"/>
    <property type="match status" value="1"/>
</dbReference>
<dbReference type="Pfam" id="PF01668">
    <property type="entry name" value="SmpB"/>
    <property type="match status" value="1"/>
</dbReference>
<dbReference type="SUPFAM" id="SSF74982">
    <property type="entry name" value="Small protein B (SmpB)"/>
    <property type="match status" value="1"/>
</dbReference>
<dbReference type="PROSITE" id="PS01317">
    <property type="entry name" value="SSRP"/>
    <property type="match status" value="1"/>
</dbReference>